<comment type="function">
    <text evidence="2 4 5 8">Pore-forming, alpha-1C subunit of the voltage-gated calcium channel that gives rise to L-type calcium currents (PubMed:10101289). Mediates influx of calcium ions into the cytoplasm, and thereby triggers calcium release from the sarcoplasm (By similarity). Plays an important role in excitation-contraction coupling in the heart (By similarity). Required for normal heart development and normal regulation of heart rhythm (By similarity). Required for normal contraction of smooth muscle cells in blood vessels and in the intestine (By similarity). Essential for normal blood pressure regulation via its role in the contraction of arterial smooth muscle cells (By similarity). Long-lasting (L-type) calcium channels belong to the 'high-voltage activated' (HVA) group (By similarity).</text>
</comment>
<comment type="catalytic activity">
    <reaction evidence="8">
        <text>Ca(2+)(in) = Ca(2+)(out)</text>
        <dbReference type="Rhea" id="RHEA:29671"/>
        <dbReference type="ChEBI" id="CHEBI:29108"/>
    </reaction>
</comment>
<comment type="activity regulation">
    <text evidence="2 5 8">Inhibited by dihydropyridines (DHP), such as isradipine (By similarity). Inhibited by nifedipine (PubMed:10101289). Channel activity is regulated by Ca(2+) and calmodulin (By similarity). Binding of STAC1, STAC2 or STAC3 to a region that overlaps with the calmodulin binding site inhibits channel inactivation by Ca(2+) and calmodulin (By similarity). Binding of calmodulin or CABP1 at the same regulatory sites results in opposite effects on the channel function (By similarity). Shear stress and pressure increases calcium channel activity (By similarity).</text>
</comment>
<comment type="subunit">
    <text evidence="2 4 5">Component of a calcium channel complex consisting of a pore-forming alpha subunit (CACNA1C) and ancillary beta, gamma and delta subunits. The channel complex contains alpha, beta, gamma and delta subunits in a 1:1:1:1 ratio, i.e. it contains only one of each type of subunit. CACNA1C channel activity is modulated by ancillary subunits, such as CACNB1, CACNB2, CACNB3, CACNA2D1 and CACNA2D4 (By similarity). Interacts with CACNB1 (By similarity). Interacts with CACNB2. Identified in a complex with CACNA2D4 and CACNB3. Interacts with CACNB3. Interacts with CACNA2D1. Interacts with CACNA2D4 (By similarity). Interacts with the gamma subunits CACNG4, CACNG6, CACNG7 and CACNG8 (By similarity). Interacts with CALM1. Interacts (via the N-terminus and the C-terminal C and IQ motifs) with CABP1; this inhibits Ca(2+)-dependent channel inactivation. The binding via the C motif is calcium independent whereas the binding via IQ requires the presence of calcium and is mutually exclusive with calmodulin binding (By similarity). The binding to the cytoplasmic N-terminal domain is calcium independent but is essential for the channel modulation. Interacts (via C-terminal CDB motif) with CABP5; in a calcium-dependent manner. Interacts with CIB1; the interaction increases upon cardiomyocytes hypertrophy (By similarity). Interacts with STAC2 and STAC3; this inhibits channel inactivation (By similarity).</text>
</comment>
<comment type="interaction">
    <interactant intactId="EBI-9084208">
        <id>O35505</id>
    </interactant>
    <interactant intactId="EBI-397435">
        <id>P62158</id>
        <label>CALM3</label>
    </interactant>
    <organismsDiffer>true</organismsDiffer>
    <experiments>2</experiments>
</comment>
<comment type="interaction">
    <interactant intactId="EBI-9084208">
        <id>O35505</id>
    </interactant>
    <interactant intactId="EBI-1268770">
        <id>P20810</id>
        <label>CAST</label>
    </interactant>
    <organismsDiffer>true</organismsDiffer>
    <experiments>2</experiments>
</comment>
<comment type="subcellular location">
    <subcellularLocation>
        <location evidence="2">Cell membrane</location>
        <topology evidence="2">Multi-pass membrane protein</topology>
    </subcellularLocation>
    <subcellularLocation>
        <location evidence="2">Cell membrane</location>
        <location evidence="2">Sarcolemma</location>
        <topology evidence="2">Multi-pass membrane protein</topology>
    </subcellularLocation>
    <subcellularLocation>
        <location evidence="3">Perikaryon</location>
    </subcellularLocation>
    <subcellularLocation>
        <location evidence="3">Postsynaptic density membrane</location>
    </subcellularLocation>
    <subcellularLocation>
        <location evidence="3">Cell projection</location>
        <location evidence="3">Dendrite</location>
    </subcellularLocation>
    <subcellularLocation>
        <location evidence="4">Cell membrane</location>
        <location evidence="4">Sarcolemma</location>
        <location evidence="4">T-tubule</location>
    </subcellularLocation>
    <text evidence="2">Colocalizes with ryanodine receptors in distinct clusters at the junctional membrane, where the sarcolemma and the sarcoplasmic reticulum are in close contact. The interaction between RRAD and CACNB2 promotes the expression of CACNA1C at the cell membrane.</text>
</comment>
<comment type="alternative products">
    <event type="alternative splicing"/>
    <isoform>
        <id>O35505-1</id>
        <name>1</name>
        <sequence type="displayed"/>
    </isoform>
    <isoform>
        <id>O35505-2</id>
        <name>2</name>
        <sequence type="described" ref="VSP_060907"/>
    </isoform>
</comment>
<comment type="tissue specificity">
    <text evidence="8 9">Expressed in heart (PubMed:10101289). Expressed in uterus (PubMed:11058528).</text>
</comment>
<comment type="developmental stage">
    <text evidence="9">During gestation, expression in the uterus is relatively constant between 34 and 47 days, increases by approximately threefold relative to the expression level of 34 days by 54 days and persists at the elevated levels through term.</text>
</comment>
<comment type="domain">
    <text>Each of the four internal repeats contains five hydrophobic transmembrane segments (S1, S2, S3, S5, S6) and one positively charged transmembrane segment (S4). S4 segments probably represent the voltage-sensor and are characterized by a series of positively charged amino acids at every third position.</text>
</comment>
<comment type="domain">
    <text evidence="2">Binding of intracellular calcium through the EF-hand motif inhibits the opening of the channel.</text>
</comment>
<comment type="PTM">
    <text evidence="4">Phosphorylation by PKA at Ser-1927 activates the channel. Elevated levels of blood glucose lead to increased phosphorylation by PKA.</text>
</comment>
<comment type="similarity">
    <text evidence="10">Belongs to the calcium channel alpha-1 subunit (TC 1.A.1.11) family. CACNA1C subfamily.</text>
</comment>
<reference evidence="11" key="1">
    <citation type="journal article" date="1999" name="J. Biochem.">
        <title>Cloning and expression of the Ca2+ channel alpha1C and beta2a subunits from guinea pig heart.</title>
        <authorList>
            <person name="Ding S."/>
            <person name="Kuroki S."/>
            <person name="Kameyama A."/>
            <person name="Yoshimura A."/>
            <person name="Kameyama M."/>
        </authorList>
    </citation>
    <scope>NUCLEOTIDE SEQUENCE [MRNA] (ISOFORM 1)</scope>
    <scope>FUNCTION</scope>
    <scope>ACTIVITY REGULATION</scope>
    <scope>TISSUE SPECIFICITY</scope>
    <scope>TRANSPORTER ACTIVITY</scope>
    <source>
        <tissue evidence="11">Heart</tissue>
    </source>
</reference>
<reference key="2">
    <citation type="journal article" date="2000" name="Biol. Reprod.">
        <title>Gestational changes in uterine L-type calcium channel function and expression in guinea pig.</title>
        <authorList>
            <person name="Collins P.L."/>
            <person name="Moore J.J."/>
            <person name="Lundgren D.W."/>
            <person name="Choobineh E."/>
            <person name="Chang S.M."/>
            <person name="Chang A.S."/>
        </authorList>
    </citation>
    <scope>NUCLEOTIDE SEQUENCE [MRNA] OF 1198-1484 (ISOFORM 2)</scope>
    <scope>TISSUE SPECIFICITY</scope>
    <scope>DEVELOPMENTAL STAGE</scope>
    <source>
        <tissue>Uterus</tissue>
    </source>
</reference>
<gene>
    <name type="primary">CACNA1C</name>
    <name type="synonym">CACH2</name>
    <name type="synonym">CACN2</name>
    <name type="synonym">CACNL1A1</name>
    <name type="synonym">CCHL1A1</name>
</gene>
<name>CAC1C_CAVPO</name>
<accession>O35505</accession>
<accession>Q9Z305</accession>
<feature type="chain" id="PRO_0000053927" description="Voltage-dependent L-type calcium channel subunit alpha-1C">
    <location>
        <begin position="1"/>
        <end position="2169"/>
    </location>
</feature>
<feature type="topological domain" description="Cytoplasmic" evidence="10">
    <location>
        <begin position="1"/>
        <end position="153"/>
    </location>
</feature>
<feature type="transmembrane region" description="Helical; Name=S1 of repeat I" evidence="1">
    <location>
        <begin position="154"/>
        <end position="172"/>
    </location>
</feature>
<feature type="topological domain" description="Extracellular" evidence="10">
    <location>
        <begin position="173"/>
        <end position="187"/>
    </location>
</feature>
<feature type="transmembrane region" description="Helical; Name=S2 of repeat I" evidence="1">
    <location>
        <begin position="188"/>
        <end position="208"/>
    </location>
</feature>
<feature type="topological domain" description="Cytoplasmic" evidence="10">
    <location>
        <begin position="209"/>
        <end position="217"/>
    </location>
</feature>
<feature type="transmembrane region" description="Helical; Name=S3 of repeat I" evidence="1">
    <location>
        <begin position="218"/>
        <end position="238"/>
    </location>
</feature>
<feature type="topological domain" description="Extracellular" evidence="10">
    <location>
        <begin position="239"/>
        <end position="261"/>
    </location>
</feature>
<feature type="transmembrane region" description="Helical; Name=S4 of repeat I" evidence="1">
    <location>
        <begin position="262"/>
        <end position="280"/>
    </location>
</feature>
<feature type="topological domain" description="Cytoplasmic" evidence="10">
    <location>
        <begin position="281"/>
        <end position="297"/>
    </location>
</feature>
<feature type="transmembrane region" description="Helical; Name=S5 of repeat I" evidence="1">
    <location>
        <begin position="298"/>
        <end position="319"/>
    </location>
</feature>
<feature type="topological domain" description="Extracellular" evidence="10">
    <location>
        <begin position="320"/>
        <end position="379"/>
    </location>
</feature>
<feature type="intramembrane region" description="Pore-forming" evidence="1">
    <location>
        <begin position="380"/>
        <end position="401"/>
    </location>
</feature>
<feature type="topological domain" description="Extracellular" evidence="10">
    <location>
        <begin position="402"/>
        <end position="409"/>
    </location>
</feature>
<feature type="transmembrane region" description="Helical; Name=S6 of repeat I" evidence="1">
    <location>
        <begin position="410"/>
        <end position="430"/>
    </location>
</feature>
<feature type="topological domain" description="Cytoplasmic" evidence="10">
    <location>
        <begin position="431"/>
        <end position="553"/>
    </location>
</feature>
<feature type="transmembrane region" description="Helical; Name=S1 of repeat II" evidence="1">
    <location>
        <begin position="554"/>
        <end position="572"/>
    </location>
</feature>
<feature type="topological domain" description="Extracellular" evidence="10">
    <location>
        <begin position="573"/>
        <end position="583"/>
    </location>
</feature>
<feature type="transmembrane region" description="Helical; Name=S2 of repeat II" evidence="1">
    <location>
        <begin position="584"/>
        <end position="604"/>
    </location>
</feature>
<feature type="topological domain" description="Cytoplasmic" evidence="10">
    <location>
        <begin position="605"/>
        <end position="615"/>
    </location>
</feature>
<feature type="transmembrane region" description="Helical; Name=S3 of repeat II" evidence="1">
    <location>
        <begin position="616"/>
        <end position="635"/>
    </location>
</feature>
<feature type="topological domain" description="Extracellular" evidence="10">
    <location>
        <begin position="636"/>
        <end position="644"/>
    </location>
</feature>
<feature type="transmembrane region" description="Helical; Name=S4 of repeat II" evidence="1">
    <location>
        <begin position="645"/>
        <end position="663"/>
    </location>
</feature>
<feature type="topological domain" description="Cytoplasmic" evidence="10">
    <location>
        <begin position="664"/>
        <end position="682"/>
    </location>
</feature>
<feature type="transmembrane region" description="Helical; Name=S5 of repeat II" evidence="1">
    <location>
        <begin position="683"/>
        <end position="702"/>
    </location>
</feature>
<feature type="topological domain" description="Extracellular" evidence="10">
    <location>
        <begin position="703"/>
        <end position="722"/>
    </location>
</feature>
<feature type="intramembrane region" description="Pore-forming" evidence="1">
    <location>
        <begin position="723"/>
        <end position="744"/>
    </location>
</feature>
<feature type="topological domain" description="Extracellular" evidence="10">
    <location>
        <begin position="745"/>
        <end position="754"/>
    </location>
</feature>
<feature type="transmembrane region" description="Helical; Name=S6 of repeat II" evidence="1">
    <location>
        <begin position="755"/>
        <end position="774"/>
    </location>
</feature>
<feature type="topological domain" description="Cytoplasmic" evidence="10">
    <location>
        <begin position="775"/>
        <end position="929"/>
    </location>
</feature>
<feature type="transmembrane region" description="Helical; Name=S1 of repeat III" evidence="1">
    <location>
        <begin position="930"/>
        <end position="948"/>
    </location>
</feature>
<feature type="topological domain" description="Extracellular" evidence="10">
    <location>
        <begin position="949"/>
        <end position="960"/>
    </location>
</feature>
<feature type="transmembrane region" description="Helical; Name=S2 of repeat III" evidence="1">
    <location>
        <begin position="961"/>
        <end position="980"/>
    </location>
</feature>
<feature type="topological domain" description="Cytoplasmic" evidence="10">
    <location>
        <begin position="981"/>
        <end position="996"/>
    </location>
</feature>
<feature type="transmembrane region" description="Helical; Name=S3 of repeat III" evidence="1">
    <location>
        <begin position="997"/>
        <end position="1015"/>
    </location>
</feature>
<feature type="topological domain" description="Extracellular" evidence="10">
    <location>
        <begin position="1016"/>
        <end position="1022"/>
    </location>
</feature>
<feature type="transmembrane region" description="Helical; Name=S4 of repeat III" evidence="1">
    <location>
        <begin position="1023"/>
        <end position="1041"/>
    </location>
</feature>
<feature type="topological domain" description="Cytoplasmic" evidence="10">
    <location>
        <begin position="1042"/>
        <end position="1060"/>
    </location>
</feature>
<feature type="transmembrane region" description="Helical; Name=S5 of repeat III" evidence="1">
    <location>
        <begin position="1061"/>
        <end position="1080"/>
    </location>
</feature>
<feature type="topological domain" description="Extracellular" evidence="10">
    <location>
        <begin position="1081"/>
        <end position="1130"/>
    </location>
</feature>
<feature type="intramembrane region" description="Pore-forming" evidence="1">
    <location>
        <begin position="1131"/>
        <end position="1151"/>
    </location>
</feature>
<feature type="topological domain" description="Extracellular" evidence="10">
    <location>
        <begin position="1152"/>
        <end position="1168"/>
    </location>
</feature>
<feature type="transmembrane region" description="Helical; Name=S6 of repeat III" evidence="1">
    <location>
        <begin position="1169"/>
        <end position="1190"/>
    </location>
</feature>
<feature type="topological domain" description="Cytoplasmic" evidence="10">
    <location>
        <begin position="1191"/>
        <end position="1248"/>
    </location>
</feature>
<feature type="transmembrane region" description="Helical; Name=S1 of repeat IV" evidence="1">
    <location>
        <begin position="1249"/>
        <end position="1270"/>
    </location>
</feature>
<feature type="topological domain" description="Extracellular" evidence="10">
    <location>
        <begin position="1271"/>
        <end position="1278"/>
    </location>
</feature>
<feature type="transmembrane region" description="Helical; Name=S2 of repeat IV" evidence="1">
    <location>
        <begin position="1279"/>
        <end position="1300"/>
    </location>
</feature>
<feature type="topological domain" description="Cytoplasmic" evidence="10">
    <location>
        <begin position="1301"/>
        <end position="1310"/>
    </location>
</feature>
<feature type="transmembrane region" description="Helical; Name=S3 of repeat IV" evidence="1">
    <location>
        <begin position="1311"/>
        <end position="1330"/>
    </location>
</feature>
<feature type="topological domain" description="Extracellular" evidence="10">
    <location>
        <begin position="1331"/>
        <end position="1353"/>
    </location>
</feature>
<feature type="transmembrane region" description="Helical; Name=S4 of repeat IV" evidence="1">
    <location>
        <begin position="1354"/>
        <end position="1372"/>
    </location>
</feature>
<feature type="topological domain" description="Cytoplasmic" evidence="10">
    <location>
        <begin position="1373"/>
        <end position="1390"/>
    </location>
</feature>
<feature type="transmembrane region" description="Helical; Name=S5 of repeat IV" evidence="1">
    <location>
        <begin position="1391"/>
        <end position="1411"/>
    </location>
</feature>
<feature type="topological domain" description="Extracellular" evidence="10">
    <location>
        <begin position="1412"/>
        <end position="1433"/>
    </location>
</feature>
<feature type="intramembrane region" description="Pore-forming" evidence="1">
    <location>
        <begin position="1434"/>
        <end position="1452"/>
    </location>
</feature>
<feature type="topological domain" description="Extracellular" evidence="10">
    <location>
        <begin position="1453"/>
        <end position="1480"/>
    </location>
</feature>
<feature type="transmembrane region" description="Helical; Name=S6 of repeat IV" evidence="1">
    <location>
        <begin position="1481"/>
        <end position="1505"/>
    </location>
</feature>
<feature type="topological domain" description="Cytoplasmic" evidence="10">
    <location>
        <begin position="1506"/>
        <end position="2169"/>
    </location>
</feature>
<feature type="repeat" description="I" evidence="10">
    <location>
        <begin position="140"/>
        <end position="437"/>
    </location>
</feature>
<feature type="repeat" description="II" evidence="10">
    <location>
        <begin position="539"/>
        <end position="785"/>
    </location>
</feature>
<feature type="repeat" description="III" evidence="10">
    <location>
        <begin position="916"/>
        <end position="1198"/>
    </location>
</feature>
<feature type="repeat" description="IV" evidence="10">
    <location>
        <begin position="1235"/>
        <end position="1508"/>
    </location>
</feature>
<feature type="region of interest" description="Calmodulin-binding" evidence="5">
    <location>
        <begin position="76"/>
        <end position="97"/>
    </location>
</feature>
<feature type="region of interest" description="Disordered" evidence="7">
    <location>
        <begin position="98"/>
        <end position="127"/>
    </location>
</feature>
<feature type="region of interest" description="AID/alpha-interaction domain; mediates interaction with the beta subunit" evidence="5">
    <location>
        <begin position="457"/>
        <end position="474"/>
    </location>
</feature>
<feature type="region of interest" description="Disordered" evidence="7">
    <location>
        <begin position="478"/>
        <end position="510"/>
    </location>
</feature>
<feature type="region of interest" description="Disordered" evidence="7">
    <location>
        <begin position="793"/>
        <end position="890"/>
    </location>
</feature>
<feature type="region of interest" description="Interaction with STAC2" evidence="5">
    <location>
        <begin position="858"/>
        <end position="905"/>
    </location>
</feature>
<feature type="region of interest" description="Dihydropyridine binding" evidence="1">
    <location>
        <begin position="1118"/>
        <end position="1207"/>
    </location>
</feature>
<feature type="region of interest" description="Dihydropyridine binding" evidence="1">
    <location>
        <begin position="1459"/>
        <end position="1527"/>
    </location>
</feature>
<feature type="region of interest" description="Phenylalkylamine binding" evidence="1">
    <location>
        <begin position="1473"/>
        <end position="1515"/>
    </location>
</feature>
<feature type="region of interest" description="Important for interaction with STAC1, STAC2 and STAC3" evidence="2">
    <location>
        <begin position="1640"/>
        <end position="1667"/>
    </location>
</feature>
<feature type="region of interest" description="Calmodulin-binding IQ region" evidence="5">
    <location>
        <begin position="1646"/>
        <end position="1666"/>
    </location>
</feature>
<feature type="region of interest" description="Important for localization in at the junctional membrane" evidence="2">
    <location>
        <begin position="1680"/>
        <end position="1699"/>
    </location>
</feature>
<feature type="region of interest" description="Disordered" evidence="7">
    <location>
        <begin position="1761"/>
        <end position="1793"/>
    </location>
</feature>
<feature type="region of interest" description="Disordered" evidence="7">
    <location>
        <begin position="1894"/>
        <end position="1920"/>
    </location>
</feature>
<feature type="short sequence motif" description="Selectivity filter of repeat I" evidence="1">
    <location>
        <begin position="390"/>
        <end position="393"/>
    </location>
</feature>
<feature type="short sequence motif" description="Selectivity filter of repeat II" evidence="1">
    <location>
        <begin position="733"/>
        <end position="736"/>
    </location>
</feature>
<feature type="short sequence motif" description="Selectivity filter of repeat III" evidence="1">
    <location>
        <begin position="1142"/>
        <end position="1145"/>
    </location>
</feature>
<feature type="short sequence motif" description="Selectivity filter of repeat IV" evidence="1">
    <location>
        <begin position="1443"/>
        <end position="1446"/>
    </location>
</feature>
<feature type="compositionally biased region" description="Polar residues" evidence="7">
    <location>
        <begin position="98"/>
        <end position="108"/>
    </location>
</feature>
<feature type="compositionally biased region" description="Basic residues" evidence="7">
    <location>
        <begin position="109"/>
        <end position="120"/>
    </location>
</feature>
<feature type="compositionally biased region" description="Polar residues" evidence="7">
    <location>
        <begin position="494"/>
        <end position="507"/>
    </location>
</feature>
<feature type="compositionally biased region" description="Basic and acidic residues" evidence="7">
    <location>
        <begin position="812"/>
        <end position="835"/>
    </location>
</feature>
<feature type="compositionally biased region" description="Acidic residues" evidence="7">
    <location>
        <begin position="872"/>
        <end position="881"/>
    </location>
</feature>
<feature type="compositionally biased region" description="Polar residues" evidence="7">
    <location>
        <begin position="1780"/>
        <end position="1792"/>
    </location>
</feature>
<feature type="compositionally biased region" description="Basic and acidic residues" evidence="7">
    <location>
        <begin position="1894"/>
        <end position="1910"/>
    </location>
</feature>
<feature type="binding site" evidence="1">
    <location>
        <position position="392"/>
    </location>
    <ligand>
        <name>Ca(2+)</name>
        <dbReference type="ChEBI" id="CHEBI:29108"/>
    </ligand>
</feature>
<feature type="binding site" evidence="5">
    <location>
        <position position="735"/>
    </location>
    <ligand>
        <name>Ca(2+)</name>
        <dbReference type="ChEBI" id="CHEBI:29108"/>
    </ligand>
</feature>
<feature type="binding site" evidence="5">
    <location>
        <position position="1144"/>
    </location>
    <ligand>
        <name>Ca(2+)</name>
        <dbReference type="ChEBI" id="CHEBI:29108"/>
    </ligand>
</feature>
<feature type="modified residue" description="Phosphoserine" evidence="4">
    <location>
        <position position="498"/>
    </location>
</feature>
<feature type="modified residue" description="Phosphothreonine" evidence="4">
    <location>
        <position position="505"/>
    </location>
</feature>
<feature type="modified residue" description="Phosphoserine" evidence="4">
    <location>
        <position position="837"/>
    </location>
</feature>
<feature type="modified residue" description="Phosphoserine" evidence="4">
    <location>
        <position position="844"/>
    </location>
</feature>
<feature type="modified residue" description="Phosphoserine" evidence="4">
    <location>
        <position position="1699"/>
    </location>
</feature>
<feature type="modified residue" description="Phosphoserine" evidence="4">
    <location>
        <position position="1720"/>
    </location>
</feature>
<feature type="modified residue" description="Phosphoserine" evidence="5">
    <location>
        <position position="1927"/>
    </location>
</feature>
<feature type="glycosylation site" description="N-linked (GlcNAc...) asparagine" evidence="6">
    <location>
        <position position="182"/>
    </location>
</feature>
<feature type="glycosylation site" description="N-linked (GlcNAc...) asparagine" evidence="6">
    <location>
        <position position="357"/>
    </location>
</feature>
<feature type="glycosylation site" description="N-linked (GlcNAc...) asparagine" evidence="6">
    <location>
        <position position="1417"/>
    </location>
</feature>
<feature type="glycosylation site" description="N-linked (GlcNAc...) asparagine" evidence="6">
    <location>
        <position position="1468"/>
    </location>
</feature>
<feature type="disulfide bond" evidence="1">
    <location>
        <begin position="345"/>
        <end position="361"/>
    </location>
</feature>
<feature type="disulfide bond" evidence="1">
    <location>
        <begin position="1087"/>
        <end position="1098"/>
    </location>
</feature>
<feature type="disulfide bond" evidence="1">
    <location>
        <begin position="1460"/>
        <end position="1476"/>
    </location>
</feature>
<feature type="splice variant" id="VSP_060907" description="In isoform 2." evidence="10">
    <original>KNQHQYKVWYVVNSTYFEYLMFVLILLNTICLAMQHYGQSCLFKIAMNILNMLFTGLFTVEMILKLIAFKPKHYFCDAWNTFDALIVVGSIVDIAITEVNPAEHTQCSPSMNAEENSRI</original>
    <variation>I</variation>
    <location>
        <begin position="1234"/>
        <end position="1352"/>
    </location>
</feature>
<feature type="sequence conflict" description="In Ref. 2; AAB62890." evidence="10" ref="2">
    <original>C</original>
    <variation>R</variation>
    <location>
        <position position="1460"/>
    </location>
</feature>
<feature type="sequence conflict" description="In Ref. 2; AAB62890." evidence="10" ref="2">
    <original>D</original>
    <variation>E</variation>
    <location>
        <position position="1465"/>
    </location>
</feature>
<organism>
    <name type="scientific">Cavia porcellus</name>
    <name type="common">Guinea pig</name>
    <dbReference type="NCBI Taxonomy" id="10141"/>
    <lineage>
        <taxon>Eukaryota</taxon>
        <taxon>Metazoa</taxon>
        <taxon>Chordata</taxon>
        <taxon>Craniata</taxon>
        <taxon>Vertebrata</taxon>
        <taxon>Euteleostomi</taxon>
        <taxon>Mammalia</taxon>
        <taxon>Eutheria</taxon>
        <taxon>Euarchontoglires</taxon>
        <taxon>Glires</taxon>
        <taxon>Rodentia</taxon>
        <taxon>Hystricomorpha</taxon>
        <taxon>Caviidae</taxon>
        <taxon>Cavia</taxon>
    </lineage>
</organism>
<evidence type="ECO:0000250" key="1">
    <source>
        <dbReference type="UniProtKB" id="P07293"/>
    </source>
</evidence>
<evidence type="ECO:0000250" key="2">
    <source>
        <dbReference type="UniProtKB" id="P15381"/>
    </source>
</evidence>
<evidence type="ECO:0000250" key="3">
    <source>
        <dbReference type="UniProtKB" id="P22002"/>
    </source>
</evidence>
<evidence type="ECO:0000250" key="4">
    <source>
        <dbReference type="UniProtKB" id="Q01815"/>
    </source>
</evidence>
<evidence type="ECO:0000250" key="5">
    <source>
        <dbReference type="UniProtKB" id="Q13936"/>
    </source>
</evidence>
<evidence type="ECO:0000255" key="6"/>
<evidence type="ECO:0000256" key="7">
    <source>
        <dbReference type="SAM" id="MobiDB-lite"/>
    </source>
</evidence>
<evidence type="ECO:0000269" key="8">
    <source>
    </source>
</evidence>
<evidence type="ECO:0000269" key="9">
    <source>
    </source>
</evidence>
<evidence type="ECO:0000305" key="10"/>
<evidence type="ECO:0000312" key="11">
    <source>
        <dbReference type="EMBL" id="BAA34185.2"/>
    </source>
</evidence>
<proteinExistence type="evidence at protein level"/>
<sequence length="2169" mass="242638">MVPLVQPTTPAYRPLPSHLSADTEVRGRGTLVHEAQLNCFYISPGGSNYGSPRPAHANINANAAAGLAPEHIPTPGAALSWQAAIDAGRQAKLMGSAGNTTISTVSSTQRKRQQYGKPKKQSGTTATRPPRALLCLTLKNPIRRACISIVEWKPFEIIILLTIFANCVALAIYIPFPEDDSNATNSNLERVEYLFLIIFTVEAFLKVIAYGLLFHPNAYLRNGWNLLDFIIVVVGLFSAILEQATKADGANALGGKGAGFDVKALRAFRVLRPLRLVSGVPSLQVVLNSIIKAMVPLLHTALLVLFVIIIYAIIGLELFMGKMHKTCYNQEGITDVPAEEDPSPCALESGHGRQCQNGTVCKPGWDGPKHGITNFDNFAFAMLTVFQCITMEGWTDVLYWMQDAMGYELPWVYFVSLVIFGSFFVLNLVLGVLSGEFSKEREKAKARGDFQKLREKQQLEEDLKGYLDWITQAEDIDPENEDEGVDEEKPRNMSMPTSETESVNTENVAGGDIEGENCGARLAHRISKSKFSRYWRRWNRFCRRKCRAAVKSNVFYWLVIFLVFLNTLTIASEHYNQPHWLTEVQDTANKALLALFTAEMLLKMYSLGLQAYFVSLFNRLDCFIVCGGILETILVETKIMSPLGISVLRCVRLLRIFKITRYWNSLSNLVASLLNSVRSIASLLLLLFLFIIIFSLLGMQLFGGKFNFDEMRTRRSTFDNFPQSLLTVFQILTGEDWNSVMYDGIMAYGGPSFPGMLVCIYFIILFICGNYILLNVFLAIAVDNLADAESLTSAQKEEEEEKERKKLARTASPEKKQEVVEKPAVEETKEEKIELKSITADGESPPTTKINMDDLQPNENEDKSPYPNPDAAGEEDEEEPEMPVGPRPRPLSELHLKEKAVPMPEASAFFIFSPNNRFRLQCHRIVNDTIFTNLILFFILLSSISLAAEDPVQHTSFRNHILFYFDIVFTTIFTIEIALKMTAYGAFLHKGSFCRNYFNILDLLVVSVSLISFGIQSSAINVVKILRVLRVLRPLRAINRAKGLKHVVQCVFVAIRTIGNIVIVTTLLQFMFACIGVQLFKGKLYTCSDSSKQTEAECKGNYITYKDGEVDQPIIQPRSWENSKFDFDNVLAAMMALFTVSTFEGWPELLYRSIDSHTEDKGPIYNYRVEISIFFIIYIIIIAFFMMNIFVGFVIVTFQEQGEQEYKNCELDKNQRQCVEYALKARPLRRYIPKNQHQYKVWYVVNSTYFEYLMFVLILLNTICLAMQHYGQSCLFKIAMNILNMLFTGLFTVEMILKLIAFKPKHYFCDAWNTFDALIVVGSIVDIAITEVNPAEHTQCSPSMNAEENSRISITFFRLFRVMRLVKLLSRGEGIRTLLWTFIKSFQALPYVALLIVMLFFIYAVIGMQVFGKIALNDTTEINRNNNFQTFPQAVLLLFRCATGEAWQDIMLACMPGKKCAPESDPSNSTEGETPCGSSFAVFYFISFYMLCAFLIINLFVAVVMDNFDYLTRDWSILGPHHLDEFKRIWAEYDPEAKGRIKHLDVVTLLRRIQPPLGFGKLCPHRVACKRLVSMNMPLNSDGTAMFNATLFALVRTALRIKTEGNLEQANEELRAIIKKIWKRTSMKLLDQVVPPAGDDEVTVGKFYATFLIQEYFRKFKKRKEQGLVGKPSQRNALSLQAGLRTLHDIGPEIRRAISGDLTAEEELDKAMKEAVSAASEDDIFGRAGGLFGNHVSYYQSDSRSTFPQTFTTQRPLHINKAGNNQGDTESPSHEKLVDSTFTPSSYSSTGSNANINNANNTALGRFPHPAGYPSTVSTVEGHRPPSSPATWAQEATRKLGAMRCHSRESQIAVVCQEEPSQDKTYDVELNKDAEYCSEPSLLSTEMLSYKDDENRQLTPPEEDKGDTRPSPKKGFLRSASLGRRASFHLECLKRQKNHGGDISQKTVLPLHLVHHQALAVAGLSPLLQRSHSPTAIPRPCATPPATPGSRGWPPKPIPTLRLEGAESCEKLNSSFPSIHCSSWSEEPSPCGGGSSAARRARPVSLMVPSQAGAPGRQFHGSASSLAEAVLISEGLGQFAQDPKFIEVTTQELADACDMTIGEMENAADNILSGGAPQSPNGTLLPFVNCRDPGQDRAGGDEDEGCACALGRGWSEEELADSRVHVRSL</sequence>
<keyword id="KW-0025">Alternative splicing</keyword>
<keyword id="KW-0106">Calcium</keyword>
<keyword id="KW-0107">Calcium channel</keyword>
<keyword id="KW-0109">Calcium transport</keyword>
<keyword id="KW-0112">Calmodulin-binding</keyword>
<keyword id="KW-1003">Cell membrane</keyword>
<keyword id="KW-0966">Cell projection</keyword>
<keyword id="KW-1015">Disulfide bond</keyword>
<keyword id="KW-0325">Glycoprotein</keyword>
<keyword id="KW-0407">Ion channel</keyword>
<keyword id="KW-0406">Ion transport</keyword>
<keyword id="KW-0472">Membrane</keyword>
<keyword id="KW-0479">Metal-binding</keyword>
<keyword id="KW-0597">Phosphoprotein</keyword>
<keyword id="KW-0628">Postsynaptic cell membrane</keyword>
<keyword id="KW-1185">Reference proteome</keyword>
<keyword id="KW-0677">Repeat</keyword>
<keyword id="KW-0770">Synapse</keyword>
<keyword id="KW-0812">Transmembrane</keyword>
<keyword id="KW-1133">Transmembrane helix</keyword>
<keyword id="KW-0813">Transport</keyword>
<keyword id="KW-0851">Voltage-gated channel</keyword>
<dbReference type="EMBL" id="AB016287">
    <property type="protein sequence ID" value="BAA34185.2"/>
    <property type="molecule type" value="mRNA"/>
</dbReference>
<dbReference type="EMBL" id="AF005938">
    <property type="protein sequence ID" value="AAB62890.1"/>
    <property type="molecule type" value="mRNA"/>
</dbReference>
<dbReference type="RefSeq" id="NP_001166394.1">
    <molecule id="O35505-1"/>
    <property type="nucleotide sequence ID" value="NM_001172923.1"/>
</dbReference>
<dbReference type="SMR" id="O35505"/>
<dbReference type="FunCoup" id="O35505">
    <property type="interactions" value="1121"/>
</dbReference>
<dbReference type="IntAct" id="O35505">
    <property type="interactions" value="2"/>
</dbReference>
<dbReference type="MINT" id="O35505"/>
<dbReference type="BindingDB" id="O35505"/>
<dbReference type="ChEMBL" id="CHEMBL2366456"/>
<dbReference type="DrugCentral" id="O35505"/>
<dbReference type="GlyCosmos" id="O35505">
    <property type="glycosylation" value="4 sites, No reported glycans"/>
</dbReference>
<dbReference type="GeneID" id="100135490"/>
<dbReference type="KEGG" id="cpoc:100135490"/>
<dbReference type="CTD" id="775"/>
<dbReference type="eggNOG" id="KOG2301">
    <property type="taxonomic scope" value="Eukaryota"/>
</dbReference>
<dbReference type="InParanoid" id="O35505"/>
<dbReference type="OrthoDB" id="431720at2759"/>
<dbReference type="Proteomes" id="UP000005447">
    <property type="component" value="Unassembled WGS sequence"/>
</dbReference>
<dbReference type="GO" id="GO:0030425">
    <property type="term" value="C:dendrite"/>
    <property type="evidence" value="ECO:0007669"/>
    <property type="project" value="UniProtKB-SubCell"/>
</dbReference>
<dbReference type="GO" id="GO:1990454">
    <property type="term" value="C:L-type voltage-gated calcium channel complex"/>
    <property type="evidence" value="ECO:0000250"/>
    <property type="project" value="UniProtKB"/>
</dbReference>
<dbReference type="GO" id="GO:0043204">
    <property type="term" value="C:perikaryon"/>
    <property type="evidence" value="ECO:0007669"/>
    <property type="project" value="UniProtKB-SubCell"/>
</dbReference>
<dbReference type="GO" id="GO:0005886">
    <property type="term" value="C:plasma membrane"/>
    <property type="evidence" value="ECO:0000250"/>
    <property type="project" value="UniProtKB"/>
</dbReference>
<dbReference type="GO" id="GO:0098839">
    <property type="term" value="C:postsynaptic density membrane"/>
    <property type="evidence" value="ECO:0007669"/>
    <property type="project" value="UniProtKB-SubCell"/>
</dbReference>
<dbReference type="GO" id="GO:0042383">
    <property type="term" value="C:sarcolemma"/>
    <property type="evidence" value="ECO:0000250"/>
    <property type="project" value="UniProtKB"/>
</dbReference>
<dbReference type="GO" id="GO:0030315">
    <property type="term" value="C:T-tubule"/>
    <property type="evidence" value="ECO:0000250"/>
    <property type="project" value="UniProtKB"/>
</dbReference>
<dbReference type="GO" id="GO:0005516">
    <property type="term" value="F:calmodulin binding"/>
    <property type="evidence" value="ECO:0007669"/>
    <property type="project" value="UniProtKB-KW"/>
</dbReference>
<dbReference type="GO" id="GO:0008331">
    <property type="term" value="F:high voltage-gated calcium channel activity"/>
    <property type="evidence" value="ECO:0000250"/>
    <property type="project" value="UniProtKB"/>
</dbReference>
<dbReference type="GO" id="GO:0046872">
    <property type="term" value="F:metal ion binding"/>
    <property type="evidence" value="ECO:0007669"/>
    <property type="project" value="UniProtKB-KW"/>
</dbReference>
<dbReference type="GO" id="GO:0005245">
    <property type="term" value="F:voltage-gated calcium channel activity"/>
    <property type="evidence" value="ECO:0000314"/>
    <property type="project" value="UniProtKB"/>
</dbReference>
<dbReference type="GO" id="GO:0098703">
    <property type="term" value="P:calcium ion import across plasma membrane"/>
    <property type="evidence" value="ECO:0007669"/>
    <property type="project" value="TreeGrafter"/>
</dbReference>
<dbReference type="GO" id="GO:0070588">
    <property type="term" value="P:calcium ion transmembrane transport"/>
    <property type="evidence" value="ECO:0000250"/>
    <property type="project" value="UniProtKB"/>
</dbReference>
<dbReference type="GO" id="GO:0061577">
    <property type="term" value="P:calcium ion transmembrane transport via high voltage-gated calcium channel"/>
    <property type="evidence" value="ECO:0000250"/>
    <property type="project" value="UniProtKB"/>
</dbReference>
<dbReference type="GO" id="GO:0060402">
    <property type="term" value="P:calcium ion transport into cytosol"/>
    <property type="evidence" value="ECO:0000250"/>
    <property type="project" value="UniProtKB"/>
</dbReference>
<dbReference type="GO" id="GO:0061337">
    <property type="term" value="P:cardiac conduction"/>
    <property type="evidence" value="ECO:0000250"/>
    <property type="project" value="UniProtKB"/>
</dbReference>
<dbReference type="GO" id="GO:0045762">
    <property type="term" value="P:positive regulation of adenylate cyclase activity"/>
    <property type="evidence" value="ECO:0000250"/>
    <property type="project" value="UniProtKB"/>
</dbReference>
<dbReference type="GO" id="GO:0010881">
    <property type="term" value="P:regulation of cardiac muscle contraction by regulation of the release of sequestered calcium ion"/>
    <property type="evidence" value="ECO:0000250"/>
    <property type="project" value="UniProtKB"/>
</dbReference>
<dbReference type="FunFam" id="1.10.287.70:FF:000007">
    <property type="entry name" value="Voltage-dependent L-type calcium channel subunit alpha"/>
    <property type="match status" value="1"/>
</dbReference>
<dbReference type="FunFam" id="1.10.287.70:FF:000009">
    <property type="entry name" value="Voltage-dependent L-type calcium channel subunit alpha"/>
    <property type="match status" value="1"/>
</dbReference>
<dbReference type="FunFam" id="1.10.287.70:FF:000021">
    <property type="entry name" value="Voltage-dependent L-type calcium channel subunit alpha"/>
    <property type="match status" value="1"/>
</dbReference>
<dbReference type="FunFam" id="1.20.120.350:FF:000001">
    <property type="entry name" value="Voltage-dependent L-type calcium channel subunit alpha"/>
    <property type="match status" value="1"/>
</dbReference>
<dbReference type="FunFam" id="1.20.120.350:FF:000006">
    <property type="entry name" value="Voltage-dependent L-type calcium channel subunit alpha"/>
    <property type="match status" value="1"/>
</dbReference>
<dbReference type="FunFam" id="1.20.120.350:FF:000010">
    <property type="entry name" value="Voltage-dependent L-type calcium channel subunit alpha"/>
    <property type="match status" value="1"/>
</dbReference>
<dbReference type="FunFam" id="1.20.120.350:FF:000060">
    <property type="entry name" value="Voltage-dependent L-type calcium channel subunit alpha"/>
    <property type="match status" value="1"/>
</dbReference>
<dbReference type="FunFam" id="1.20.120.350:FF:000090">
    <property type="entry name" value="Voltage-dependent L-type calcium channel subunit alpha"/>
    <property type="match status" value="1"/>
</dbReference>
<dbReference type="FunFam" id="1.10.238.10:FF:000063">
    <property type="entry name" value="Voltage-dependent N-type calcium channel subunit alpha"/>
    <property type="match status" value="1"/>
</dbReference>
<dbReference type="Gene3D" id="1.10.287.70">
    <property type="match status" value="4"/>
</dbReference>
<dbReference type="Gene3D" id="6.10.250.2180">
    <property type="match status" value="1"/>
</dbReference>
<dbReference type="Gene3D" id="6.10.250.2500">
    <property type="match status" value="1"/>
</dbReference>
<dbReference type="Gene3D" id="1.20.120.350">
    <property type="entry name" value="Voltage-gated potassium channels. Chain C"/>
    <property type="match status" value="4"/>
</dbReference>
<dbReference type="InterPro" id="IPR031688">
    <property type="entry name" value="CAC1F_C"/>
</dbReference>
<dbReference type="InterPro" id="IPR031649">
    <property type="entry name" value="GPHH_dom"/>
</dbReference>
<dbReference type="InterPro" id="IPR005821">
    <property type="entry name" value="Ion_trans_dom"/>
</dbReference>
<dbReference type="InterPro" id="IPR014873">
    <property type="entry name" value="VDCC_a1su_IQ"/>
</dbReference>
<dbReference type="InterPro" id="IPR050599">
    <property type="entry name" value="VDCC_alpha-1_subunit"/>
</dbReference>
<dbReference type="InterPro" id="IPR005451">
    <property type="entry name" value="VDCC_L_a1csu"/>
</dbReference>
<dbReference type="InterPro" id="IPR005446">
    <property type="entry name" value="VDCC_L_a1su"/>
</dbReference>
<dbReference type="InterPro" id="IPR002077">
    <property type="entry name" value="VDCCAlpha1"/>
</dbReference>
<dbReference type="InterPro" id="IPR027359">
    <property type="entry name" value="Volt_channel_dom_sf"/>
</dbReference>
<dbReference type="PANTHER" id="PTHR45628">
    <property type="entry name" value="VOLTAGE-DEPENDENT CALCIUM CHANNEL TYPE A SUBUNIT ALPHA-1"/>
    <property type="match status" value="1"/>
</dbReference>
<dbReference type="PANTHER" id="PTHR45628:SF10">
    <property type="entry name" value="VOLTAGE-DEPENDENT L-TYPE CALCIUM CHANNEL SUBUNIT ALPHA-1C"/>
    <property type="match status" value="1"/>
</dbReference>
<dbReference type="Pfam" id="PF08763">
    <property type="entry name" value="Ca_chan_IQ"/>
    <property type="match status" value="1"/>
</dbReference>
<dbReference type="Pfam" id="PF16885">
    <property type="entry name" value="CAC1F_C"/>
    <property type="match status" value="1"/>
</dbReference>
<dbReference type="Pfam" id="PF16905">
    <property type="entry name" value="GPHH"/>
    <property type="match status" value="1"/>
</dbReference>
<dbReference type="Pfam" id="PF00520">
    <property type="entry name" value="Ion_trans"/>
    <property type="match status" value="4"/>
</dbReference>
<dbReference type="PRINTS" id="PR00167">
    <property type="entry name" value="CACHANNEL"/>
</dbReference>
<dbReference type="PRINTS" id="PR01630">
    <property type="entry name" value="LVDCCALPHA1"/>
</dbReference>
<dbReference type="PRINTS" id="PR01635">
    <property type="entry name" value="LVDCCALPHA1C"/>
</dbReference>
<dbReference type="SMART" id="SM01062">
    <property type="entry name" value="Ca_chan_IQ"/>
    <property type="match status" value="1"/>
</dbReference>
<dbReference type="SUPFAM" id="SSF81324">
    <property type="entry name" value="Voltage-gated potassium channels"/>
    <property type="match status" value="4"/>
</dbReference>
<protein>
    <recommendedName>
        <fullName>Voltage-dependent L-type calcium channel subunit alpha-1C</fullName>
    </recommendedName>
    <alternativeName>
        <fullName>Calcium channel, L type, alpha-1 polypeptide, isoform 1, cardiac muscle</fullName>
    </alternativeName>
    <alternativeName>
        <fullName>Voltage-gated calcium channel subunit alpha Cav1.2</fullName>
    </alternativeName>
</protein>